<protein>
    <recommendedName>
        <fullName evidence="1">Gamma-glutamyl phosphate reductase</fullName>
        <shortName evidence="1">GPR</shortName>
        <ecNumber evidence="1">1.2.1.41</ecNumber>
    </recommendedName>
    <alternativeName>
        <fullName evidence="1">Glutamate-5-semialdehyde dehydrogenase</fullName>
    </alternativeName>
    <alternativeName>
        <fullName evidence="1">Glutamyl-gamma-semialdehyde dehydrogenase</fullName>
        <shortName evidence="1">GSA dehydrogenase</shortName>
    </alternativeName>
</protein>
<keyword id="KW-0028">Amino-acid biosynthesis</keyword>
<keyword id="KW-0963">Cytoplasm</keyword>
<keyword id="KW-0521">NADP</keyword>
<keyword id="KW-0560">Oxidoreductase</keyword>
<keyword id="KW-0641">Proline biosynthesis</keyword>
<proteinExistence type="inferred from homology"/>
<accession>Q8Z932</accession>
<gene>
    <name evidence="1" type="primary">proA</name>
    <name type="ordered locus">STY0367</name>
    <name type="ordered locus">t2528</name>
</gene>
<dbReference type="EC" id="1.2.1.41" evidence="1"/>
<dbReference type="EMBL" id="AL513382">
    <property type="protein sequence ID" value="CAD08792.1"/>
    <property type="molecule type" value="Genomic_DNA"/>
</dbReference>
<dbReference type="EMBL" id="AE014613">
    <property type="protein sequence ID" value="AAO70112.1"/>
    <property type="molecule type" value="Genomic_DNA"/>
</dbReference>
<dbReference type="RefSeq" id="NP_454934.1">
    <property type="nucleotide sequence ID" value="NC_003198.1"/>
</dbReference>
<dbReference type="RefSeq" id="WP_000893213.1">
    <property type="nucleotide sequence ID" value="NZ_WSUR01000017.1"/>
</dbReference>
<dbReference type="SMR" id="Q8Z932"/>
<dbReference type="STRING" id="220341.gene:17584396"/>
<dbReference type="KEGG" id="stt:t2528"/>
<dbReference type="KEGG" id="sty:STY0367"/>
<dbReference type="PATRIC" id="fig|220341.7.peg.362"/>
<dbReference type="eggNOG" id="COG0014">
    <property type="taxonomic scope" value="Bacteria"/>
</dbReference>
<dbReference type="HOGENOM" id="CLU_030231_0_0_6"/>
<dbReference type="OMA" id="KTQRYGT"/>
<dbReference type="OrthoDB" id="9809970at2"/>
<dbReference type="UniPathway" id="UPA00098">
    <property type="reaction ID" value="UER00360"/>
</dbReference>
<dbReference type="Proteomes" id="UP000000541">
    <property type="component" value="Chromosome"/>
</dbReference>
<dbReference type="Proteomes" id="UP000002670">
    <property type="component" value="Chromosome"/>
</dbReference>
<dbReference type="GO" id="GO:0005737">
    <property type="term" value="C:cytoplasm"/>
    <property type="evidence" value="ECO:0007669"/>
    <property type="project" value="UniProtKB-SubCell"/>
</dbReference>
<dbReference type="GO" id="GO:0004350">
    <property type="term" value="F:glutamate-5-semialdehyde dehydrogenase activity"/>
    <property type="evidence" value="ECO:0007669"/>
    <property type="project" value="UniProtKB-UniRule"/>
</dbReference>
<dbReference type="GO" id="GO:0050661">
    <property type="term" value="F:NADP binding"/>
    <property type="evidence" value="ECO:0007669"/>
    <property type="project" value="InterPro"/>
</dbReference>
<dbReference type="GO" id="GO:0055129">
    <property type="term" value="P:L-proline biosynthetic process"/>
    <property type="evidence" value="ECO:0007669"/>
    <property type="project" value="UniProtKB-UniRule"/>
</dbReference>
<dbReference type="CDD" id="cd07079">
    <property type="entry name" value="ALDH_F18-19_ProA-GPR"/>
    <property type="match status" value="1"/>
</dbReference>
<dbReference type="FunFam" id="3.40.309.10:FF:000006">
    <property type="entry name" value="Gamma-glutamyl phosphate reductase"/>
    <property type="match status" value="1"/>
</dbReference>
<dbReference type="Gene3D" id="3.40.605.10">
    <property type="entry name" value="Aldehyde Dehydrogenase, Chain A, domain 1"/>
    <property type="match status" value="1"/>
</dbReference>
<dbReference type="Gene3D" id="3.40.309.10">
    <property type="entry name" value="Aldehyde Dehydrogenase, Chain A, domain 2"/>
    <property type="match status" value="1"/>
</dbReference>
<dbReference type="HAMAP" id="MF_00412">
    <property type="entry name" value="ProA"/>
    <property type="match status" value="1"/>
</dbReference>
<dbReference type="InterPro" id="IPR016161">
    <property type="entry name" value="Ald_DH/histidinol_DH"/>
</dbReference>
<dbReference type="InterPro" id="IPR016163">
    <property type="entry name" value="Ald_DH_C"/>
</dbReference>
<dbReference type="InterPro" id="IPR016162">
    <property type="entry name" value="Ald_DH_N"/>
</dbReference>
<dbReference type="InterPro" id="IPR015590">
    <property type="entry name" value="Aldehyde_DH_dom"/>
</dbReference>
<dbReference type="InterPro" id="IPR020593">
    <property type="entry name" value="G-glutamylP_reductase_CS"/>
</dbReference>
<dbReference type="InterPro" id="IPR012134">
    <property type="entry name" value="Glu-5-SA_DH"/>
</dbReference>
<dbReference type="InterPro" id="IPR000965">
    <property type="entry name" value="GPR_dom"/>
</dbReference>
<dbReference type="NCBIfam" id="NF001221">
    <property type="entry name" value="PRK00197.1"/>
    <property type="match status" value="1"/>
</dbReference>
<dbReference type="NCBIfam" id="TIGR00407">
    <property type="entry name" value="proA"/>
    <property type="match status" value="1"/>
</dbReference>
<dbReference type="PANTHER" id="PTHR11063:SF8">
    <property type="entry name" value="DELTA-1-PYRROLINE-5-CARBOXYLATE SYNTHASE"/>
    <property type="match status" value="1"/>
</dbReference>
<dbReference type="PANTHER" id="PTHR11063">
    <property type="entry name" value="GLUTAMATE SEMIALDEHYDE DEHYDROGENASE"/>
    <property type="match status" value="1"/>
</dbReference>
<dbReference type="Pfam" id="PF00171">
    <property type="entry name" value="Aldedh"/>
    <property type="match status" value="1"/>
</dbReference>
<dbReference type="PIRSF" id="PIRSF000151">
    <property type="entry name" value="GPR"/>
    <property type="match status" value="1"/>
</dbReference>
<dbReference type="SUPFAM" id="SSF53720">
    <property type="entry name" value="ALDH-like"/>
    <property type="match status" value="1"/>
</dbReference>
<dbReference type="PROSITE" id="PS01223">
    <property type="entry name" value="PROA"/>
    <property type="match status" value="1"/>
</dbReference>
<sequence length="416" mass="44591">MLEQMGIAAKAASYKLALLSSCEKNRVLEKIADELEAQMESILSANVQDVEQARANGLSEAMLDRLALTPARLKAIADDVRQVCNLADPAGQVIDGGLLDSGLRLERRRVPLGVVGVIYEARPNVTVDVASLCLKTGNAVILRGGKETHRTNAATVLVIQKALKACDLPEAAVQAIDNPDRSLVSEMLRMDKYIDMLIPRGGAGLHKLCREQSTIPVITGGIGVCHIFVDSSADIAPALKIIVNAKTQRPSTCNTVETLLVHQDIAERFLPALSKQMAESGVTLHGDETVMQALHGPAKLVALKPEELDNEFLSLDLNVVVVENMDGAIAHIREHGTQHSDAILTCDMHNAARFVNEVDSAAVYVNASTRFTDGGQFGLGAEVAVSTQKLHARGPMGLEALTTYKWIGFGDGTIRA</sequence>
<name>PROA_SALTI</name>
<reference key="1">
    <citation type="journal article" date="2001" name="Nature">
        <title>Complete genome sequence of a multiple drug resistant Salmonella enterica serovar Typhi CT18.</title>
        <authorList>
            <person name="Parkhill J."/>
            <person name="Dougan G."/>
            <person name="James K.D."/>
            <person name="Thomson N.R."/>
            <person name="Pickard D."/>
            <person name="Wain J."/>
            <person name="Churcher C.M."/>
            <person name="Mungall K.L."/>
            <person name="Bentley S.D."/>
            <person name="Holden M.T.G."/>
            <person name="Sebaihia M."/>
            <person name="Baker S."/>
            <person name="Basham D."/>
            <person name="Brooks K."/>
            <person name="Chillingworth T."/>
            <person name="Connerton P."/>
            <person name="Cronin A."/>
            <person name="Davis P."/>
            <person name="Davies R.M."/>
            <person name="Dowd L."/>
            <person name="White N."/>
            <person name="Farrar J."/>
            <person name="Feltwell T."/>
            <person name="Hamlin N."/>
            <person name="Haque A."/>
            <person name="Hien T.T."/>
            <person name="Holroyd S."/>
            <person name="Jagels K."/>
            <person name="Krogh A."/>
            <person name="Larsen T.S."/>
            <person name="Leather S."/>
            <person name="Moule S."/>
            <person name="O'Gaora P."/>
            <person name="Parry C."/>
            <person name="Quail M.A."/>
            <person name="Rutherford K.M."/>
            <person name="Simmonds M."/>
            <person name="Skelton J."/>
            <person name="Stevens K."/>
            <person name="Whitehead S."/>
            <person name="Barrell B.G."/>
        </authorList>
    </citation>
    <scope>NUCLEOTIDE SEQUENCE [LARGE SCALE GENOMIC DNA]</scope>
    <source>
        <strain>CT18</strain>
    </source>
</reference>
<reference key="2">
    <citation type="journal article" date="2003" name="J. Bacteriol.">
        <title>Comparative genomics of Salmonella enterica serovar Typhi strains Ty2 and CT18.</title>
        <authorList>
            <person name="Deng W."/>
            <person name="Liou S.-R."/>
            <person name="Plunkett G. III"/>
            <person name="Mayhew G.F."/>
            <person name="Rose D.J."/>
            <person name="Burland V."/>
            <person name="Kodoyianni V."/>
            <person name="Schwartz D.C."/>
            <person name="Blattner F.R."/>
        </authorList>
    </citation>
    <scope>NUCLEOTIDE SEQUENCE [LARGE SCALE GENOMIC DNA]</scope>
    <source>
        <strain>ATCC 700931 / Ty2</strain>
    </source>
</reference>
<organism>
    <name type="scientific">Salmonella typhi</name>
    <dbReference type="NCBI Taxonomy" id="90370"/>
    <lineage>
        <taxon>Bacteria</taxon>
        <taxon>Pseudomonadati</taxon>
        <taxon>Pseudomonadota</taxon>
        <taxon>Gammaproteobacteria</taxon>
        <taxon>Enterobacterales</taxon>
        <taxon>Enterobacteriaceae</taxon>
        <taxon>Salmonella</taxon>
    </lineage>
</organism>
<evidence type="ECO:0000255" key="1">
    <source>
        <dbReference type="HAMAP-Rule" id="MF_00412"/>
    </source>
</evidence>
<comment type="function">
    <text evidence="1">Catalyzes the NADPH-dependent reduction of L-glutamate 5-phosphate into L-glutamate 5-semialdehyde and phosphate. The product spontaneously undergoes cyclization to form 1-pyrroline-5-carboxylate.</text>
</comment>
<comment type="catalytic activity">
    <reaction evidence="1">
        <text>L-glutamate 5-semialdehyde + phosphate + NADP(+) = L-glutamyl 5-phosphate + NADPH + H(+)</text>
        <dbReference type="Rhea" id="RHEA:19541"/>
        <dbReference type="ChEBI" id="CHEBI:15378"/>
        <dbReference type="ChEBI" id="CHEBI:43474"/>
        <dbReference type="ChEBI" id="CHEBI:57783"/>
        <dbReference type="ChEBI" id="CHEBI:58066"/>
        <dbReference type="ChEBI" id="CHEBI:58274"/>
        <dbReference type="ChEBI" id="CHEBI:58349"/>
        <dbReference type="EC" id="1.2.1.41"/>
    </reaction>
</comment>
<comment type="pathway">
    <text evidence="1">Amino-acid biosynthesis; L-proline biosynthesis; L-glutamate 5-semialdehyde from L-glutamate: step 2/2.</text>
</comment>
<comment type="subcellular location">
    <subcellularLocation>
        <location evidence="1">Cytoplasm</location>
    </subcellularLocation>
</comment>
<comment type="similarity">
    <text evidence="1">Belongs to the gamma-glutamyl phosphate reductase family.</text>
</comment>
<feature type="chain" id="PRO_0000189777" description="Gamma-glutamyl phosphate reductase">
    <location>
        <begin position="1"/>
        <end position="416"/>
    </location>
</feature>